<sequence length="396" mass="44128">MGGGLMQLVAYGAQDIYLSGNPQITFFKVVYRRHTNFSMESIEQTFNGFPNFGKKVTCPISRNGDLIHRIYLQATVTDSIASPGLTKWAGHKLIKSVEVEIGGQRIDKHYADWLHIWNELTQTAGHWDGYKLMVNGTTASQTVAPGATTVSKTMFIPLQFWFCRNPGLALPLIALQYHEVKINLEFGDSADVMGASGASLDSAALYVDYIYLDTDERRRFAQVSHEYLIEQLQFTGDESASSKIKLNFNHPVKELIWVEKASGDGVGEYDTTYDSAKLQLNGHERFTQRTPQYFQLVQPYQHHERVPTTCVLTVDASSIETDEAVMETCTTGGINVYSFALKPEEHQPSGTCNMSRIDNATLNLQGVDTDNTVKVFAVNYNVLRVMSGMGGLAYSN</sequence>
<gene>
    <name type="primary">MCP</name>
</gene>
<name>MCP_POV01</name>
<dbReference type="EMBL" id="EU006630">
    <property type="protein sequence ID" value="ABU23714.1"/>
    <property type="molecule type" value="Genomic_DNA"/>
</dbReference>
<dbReference type="SMR" id="A7U6E9"/>
<dbReference type="GO" id="GO:0019028">
    <property type="term" value="C:viral capsid"/>
    <property type="evidence" value="ECO:0007669"/>
    <property type="project" value="UniProtKB-KW"/>
</dbReference>
<dbReference type="GO" id="GO:0005198">
    <property type="term" value="F:structural molecule activity"/>
    <property type="evidence" value="ECO:0007669"/>
    <property type="project" value="InterPro"/>
</dbReference>
<dbReference type="Gene3D" id="2.70.9.10">
    <property type="entry name" value="Adenovirus Type 2 Hexon, domain 4"/>
    <property type="match status" value="1"/>
</dbReference>
<dbReference type="Gene3D" id="2.70.9.20">
    <property type="entry name" value="Major capsid protein Vp54"/>
    <property type="match status" value="1"/>
</dbReference>
<dbReference type="InterPro" id="IPR031654">
    <property type="entry name" value="Capsid_N"/>
</dbReference>
<dbReference type="InterPro" id="IPR007542">
    <property type="entry name" value="MCP_C"/>
</dbReference>
<dbReference type="InterPro" id="IPR038519">
    <property type="entry name" value="MCP_C_sf"/>
</dbReference>
<dbReference type="InterPro" id="IPR016112">
    <property type="entry name" value="VP_dsDNA_II"/>
</dbReference>
<dbReference type="Pfam" id="PF16903">
    <property type="entry name" value="Capsid_N"/>
    <property type="match status" value="1"/>
</dbReference>
<dbReference type="Pfam" id="PF04451">
    <property type="entry name" value="Capsid_NCLDV"/>
    <property type="match status" value="2"/>
</dbReference>
<dbReference type="SUPFAM" id="SSF49749">
    <property type="entry name" value="Group II dsDNA viruses VP"/>
    <property type="match status" value="3"/>
</dbReference>
<feature type="chain" id="PRO_0000338012" description="Major capsid protein">
    <location>
        <begin position="1"/>
        <end position="396"/>
    </location>
</feature>
<protein>
    <recommendedName>
        <fullName>Major capsid protein</fullName>
        <shortName>MCP</shortName>
    </recommendedName>
</protein>
<reference key="1">
    <citation type="journal article" date="2008" name="Appl. Environ. Microbiol.">
        <title>Phylogenetic analysis of members of the Phycodnaviridae virus family, using amplified fragments of the major capsid protein gene.</title>
        <authorList>
            <person name="Larsen J.B."/>
            <person name="Larsen A."/>
            <person name="Bratbak G."/>
            <person name="Sandaa R.A."/>
        </authorList>
    </citation>
    <scope>NUCLEOTIDE SEQUENCE [GENOMIC DNA]</scope>
</reference>
<proteinExistence type="inferred from homology"/>
<organismHost>
    <name type="scientific">Pyramimonas plurioculata</name>
    <dbReference type="NCBI Taxonomy" id="36893"/>
</organismHost>
<organism>
    <name type="scientific">Pyramimonas orientalis virus</name>
    <name type="common">PoV01</name>
    <dbReference type="NCBI Taxonomy" id="455367"/>
    <lineage>
        <taxon>Viruses</taxon>
        <taxon>Varidnaviria</taxon>
        <taxon>Bamfordvirae</taxon>
        <taxon>Nucleocytoviricota</taxon>
        <taxon>Megaviricetes</taxon>
        <taxon>Imitervirales</taxon>
        <taxon>Allomimiviridae</taxon>
        <taxon>Heliosvirus</taxon>
        <taxon>Heliosvirus raunefjordenense</taxon>
    </lineage>
</organism>
<comment type="function">
    <text evidence="1">Major protein of the capsid.</text>
</comment>
<comment type="subcellular location">
    <subcellularLocation>
        <location evidence="2">Virion</location>
    </subcellularLocation>
</comment>
<comment type="similarity">
    <text evidence="2">Belongs to the NCLDV major capsid protein family.</text>
</comment>
<accession>A7U6E9</accession>
<evidence type="ECO:0000250" key="1"/>
<evidence type="ECO:0000305" key="2"/>
<keyword id="KW-0167">Capsid protein</keyword>
<keyword id="KW-0946">Virion</keyword>